<sequence>MVQRCLVVALLVVVVAAALCSAQLNFTPNWGTGKRDAADFGDPYSFLYRLIQAEARKMSGCSN</sequence>
<protein>
    <recommendedName>
        <fullName>Adipokinetic prohormone type 1</fullName>
    </recommendedName>
    <component>
        <recommendedName>
            <fullName>Adipokinetic hormone 1</fullName>
        </recommendedName>
        <alternativeName>
            <fullName>Adipokinetic hormone I</fullName>
            <shortName>AKH-I</shortName>
        </alternativeName>
    </component>
    <component>
        <recommendedName>
            <fullName>Adipokinetic hormone I4-10</fullName>
            <shortName>AKH-I4-10</shortName>
        </recommendedName>
    </component>
    <component>
        <recommendedName>
            <fullName>Adipokinetic hormone precursor-related peptide alpha chain</fullName>
            <shortName>APRP-alpha</shortName>
        </recommendedName>
    </component>
</protein>
<keyword id="KW-0027">Amidation</keyword>
<keyword id="KW-0165">Cleavage on pair of basic residues</keyword>
<keyword id="KW-0903">Direct protein sequencing</keyword>
<keyword id="KW-1015">Disulfide bond</keyword>
<keyword id="KW-0286">Flight</keyword>
<keyword id="KW-0372">Hormone</keyword>
<keyword id="KW-0527">Neuropeptide</keyword>
<keyword id="KW-0873">Pyrrolidone carboxylic acid</keyword>
<keyword id="KW-0964">Secreted</keyword>
<keyword id="KW-0732">Signal</keyword>
<evidence type="ECO:0000269" key="1">
    <source>
    </source>
</evidence>
<evidence type="ECO:0000269" key="2">
    <source>
    </source>
</evidence>
<evidence type="ECO:0000305" key="3"/>
<comment type="function">
    <text>This hormone, released from cells in the corpora cardiaca, causes release of diglycerides from the fat body and stimulation of muscles to use these diglycerides as an energy source during energy-demanding processes.</text>
</comment>
<comment type="subunit">
    <text>Adipokinetic hormone precursor-related peptide (APRP) can form three type of disulfide-bond dimers: p1 (alpha-alpha), p2 (alpha-beta), and p3 (beta-beta).</text>
</comment>
<comment type="subcellular location">
    <subcellularLocation>
        <location>Secreted</location>
    </subcellularLocation>
</comment>
<comment type="similarity">
    <text evidence="3">Belongs to the AKH/HRTH/RPCH family.</text>
</comment>
<accession>P18829</accession>
<organism>
    <name type="scientific">Schistocerca gregaria</name>
    <name type="common">Desert locust</name>
    <name type="synonym">Gryllus gregarius</name>
    <dbReference type="NCBI Taxonomy" id="7010"/>
    <lineage>
        <taxon>Eukaryota</taxon>
        <taxon>Metazoa</taxon>
        <taxon>Ecdysozoa</taxon>
        <taxon>Arthropoda</taxon>
        <taxon>Hexapoda</taxon>
        <taxon>Insecta</taxon>
        <taxon>Pterygota</taxon>
        <taxon>Neoptera</taxon>
        <taxon>Polyneoptera</taxon>
        <taxon>Orthoptera</taxon>
        <taxon>Caelifera</taxon>
        <taxon>Acrididea</taxon>
        <taxon>Acridomorpha</taxon>
        <taxon>Acridoidea</taxon>
        <taxon>Acrididae</taxon>
        <taxon>Cyrtacanthacridinae</taxon>
        <taxon>Schistocerca</taxon>
    </lineage>
</organism>
<dbReference type="PIR" id="A93412">
    <property type="entry name" value="AKLQS"/>
</dbReference>
<dbReference type="GO" id="GO:0005576">
    <property type="term" value="C:extracellular region"/>
    <property type="evidence" value="ECO:0007669"/>
    <property type="project" value="UniProtKB-SubCell"/>
</dbReference>
<dbReference type="GO" id="GO:0005179">
    <property type="term" value="F:hormone activity"/>
    <property type="evidence" value="ECO:0007669"/>
    <property type="project" value="UniProtKB-KW"/>
</dbReference>
<dbReference type="GO" id="GO:0007629">
    <property type="term" value="P:flight behavior"/>
    <property type="evidence" value="ECO:0007669"/>
    <property type="project" value="UniProtKB-KW"/>
</dbReference>
<dbReference type="GO" id="GO:0007218">
    <property type="term" value="P:neuropeptide signaling pathway"/>
    <property type="evidence" value="ECO:0007669"/>
    <property type="project" value="UniProtKB-KW"/>
</dbReference>
<dbReference type="InterPro" id="IPR002047">
    <property type="entry name" value="Adipokinetic_hormone_CS"/>
</dbReference>
<dbReference type="InterPro" id="IPR010475">
    <property type="entry name" value="AKH/RPCH_hormone"/>
</dbReference>
<dbReference type="Pfam" id="PF06377">
    <property type="entry name" value="Adipokin_hormo"/>
    <property type="match status" value="1"/>
</dbReference>
<dbReference type="PROSITE" id="PS00256">
    <property type="entry name" value="AKH"/>
    <property type="match status" value="1"/>
</dbReference>
<name>AKH1_SCHGR</name>
<reference key="1">
    <citation type="journal article" date="1989" name="Neuron">
        <title>Synthesis of a homodimer neurohormone precursor of locust adipokinetic hormone studied by in vitro translation and cDNA cloning.</title>
        <authorList>
            <person name="Schulz-Aellen M.F."/>
            <person name="Roulet E."/>
            <person name="Fischer-Lougheed J."/>
            <person name="O'Shea M."/>
        </authorList>
    </citation>
    <scope>NUCLEOTIDE SEQUENCE [MRNA]</scope>
</reference>
<reference key="2">
    <citation type="journal article" date="1989" name="Neuron">
        <title>Dimer structure of a neuropeptide precursor established: consequences for processing.</title>
        <authorList>
            <person name="Hekimi S."/>
            <person name="Burkhart W."/>
            <person name="Moyer M."/>
            <person name="Fowler E."/>
            <person name="O'Shea M."/>
        </authorList>
    </citation>
    <scope>PROTEIN SEQUENCE OF 23-63</scope>
</reference>
<reference key="3">
    <citation type="journal article" date="1976" name="Nature">
        <title>Structure of locust adipokinetic hormone, a neurohormone that regulates lipid utilisation during flight.</title>
        <authorList>
            <person name="Stone J.V."/>
            <person name="Mordue W."/>
            <person name="Batley K.E."/>
            <person name="Morris H.R."/>
        </authorList>
    </citation>
    <scope>PROTEIN SEQUENCE OF 23-32</scope>
    <scope>PYROGLUTAMATE FORMATION AT GLN-23</scope>
    <scope>AMIDATION AT THR-32</scope>
</reference>
<reference key="4">
    <citation type="journal article" date="1991" name="J. Neurosci.">
        <title>Regulation of neuropeptide stoichiometry in neurosecretory cells.</title>
        <authorList>
            <person name="Hekimi S."/>
            <person name="Fischer-Lougheed J."/>
            <person name="O'Shea M."/>
        </authorList>
    </citation>
    <scope>PROTEOLYTIC PROCESSING</scope>
</reference>
<feature type="signal peptide" evidence="1 2">
    <location>
        <begin position="1"/>
        <end position="22"/>
    </location>
</feature>
<feature type="chain" id="PRO_0000000916" description="Adipokinetic prohormone type 1">
    <location>
        <begin position="23"/>
        <end position="63"/>
    </location>
</feature>
<feature type="peptide" id="PRO_0000000917" description="Adipokinetic hormone 1">
    <location>
        <begin position="23"/>
        <end position="32"/>
    </location>
</feature>
<feature type="peptide" id="PRO_0000000918" description="Adipokinetic hormone I4-10">
    <location>
        <begin position="26"/>
        <end position="32"/>
    </location>
</feature>
<feature type="peptide" id="PRO_0000000919" description="Adipokinetic hormone precursor-related peptide alpha chain">
    <location>
        <begin position="36"/>
        <end position="63"/>
    </location>
</feature>
<feature type="modified residue" description="Pyrrolidone carboxylic acid" evidence="2">
    <location>
        <position position="23"/>
    </location>
</feature>
<feature type="modified residue" description="Threonine amide" evidence="2">
    <location>
        <position position="32"/>
    </location>
</feature>
<feature type="disulfide bond" description="Interchain">
    <location>
        <position position="61"/>
    </location>
</feature>
<proteinExistence type="evidence at protein level"/>